<protein>
    <recommendedName>
        <fullName evidence="1">NAD(P)H dehydrogenase (quinone)</fullName>
        <ecNumber evidence="1">1.6.5.2</ecNumber>
    </recommendedName>
    <alternativeName>
        <fullName>Flavoprotein WrbA</fullName>
    </alternativeName>
    <alternativeName>
        <fullName evidence="1">NAD(P)H:quinone oxidoreductase</fullName>
        <shortName evidence="1">NQO</shortName>
    </alternativeName>
</protein>
<proteinExistence type="inferred from homology"/>
<feature type="chain" id="PRO_1000200635" description="NAD(P)H dehydrogenase (quinone)">
    <location>
        <begin position="1"/>
        <end position="200"/>
    </location>
</feature>
<feature type="domain" description="Flavodoxin-like" evidence="1">
    <location>
        <begin position="4"/>
        <end position="190"/>
    </location>
</feature>
<feature type="binding site" evidence="1">
    <location>
        <begin position="10"/>
        <end position="15"/>
    </location>
    <ligand>
        <name>FMN</name>
        <dbReference type="ChEBI" id="CHEBI:58210"/>
    </ligand>
</feature>
<feature type="binding site" evidence="1">
    <location>
        <position position="12"/>
    </location>
    <ligand>
        <name>NAD(+)</name>
        <dbReference type="ChEBI" id="CHEBI:57540"/>
    </ligand>
</feature>
<feature type="binding site" evidence="1">
    <location>
        <begin position="78"/>
        <end position="80"/>
    </location>
    <ligand>
        <name>FMN</name>
        <dbReference type="ChEBI" id="CHEBI:58210"/>
    </ligand>
</feature>
<feature type="binding site" evidence="1">
    <location>
        <position position="98"/>
    </location>
    <ligand>
        <name>substrate</name>
    </ligand>
</feature>
<feature type="binding site" evidence="1">
    <location>
        <begin position="113"/>
        <end position="119"/>
    </location>
    <ligand>
        <name>FMN</name>
        <dbReference type="ChEBI" id="CHEBI:58210"/>
    </ligand>
</feature>
<feature type="binding site" evidence="1">
    <location>
        <position position="134"/>
    </location>
    <ligand>
        <name>FMN</name>
        <dbReference type="ChEBI" id="CHEBI:58210"/>
    </ligand>
</feature>
<dbReference type="EC" id="1.6.5.2" evidence="1"/>
<dbReference type="EMBL" id="CP001001">
    <property type="protein sequence ID" value="ACB25806.1"/>
    <property type="molecule type" value="Genomic_DNA"/>
</dbReference>
<dbReference type="SMR" id="B1LY35"/>
<dbReference type="STRING" id="426355.Mrad2831_3831"/>
<dbReference type="CAZy" id="AA6">
    <property type="family name" value="Auxiliary Activities 6"/>
</dbReference>
<dbReference type="GeneID" id="6139885"/>
<dbReference type="KEGG" id="mrd:Mrad2831_3831"/>
<dbReference type="eggNOG" id="COG0655">
    <property type="taxonomic scope" value="Bacteria"/>
</dbReference>
<dbReference type="HOGENOM" id="CLU_051402_0_2_5"/>
<dbReference type="OrthoDB" id="9801479at2"/>
<dbReference type="Proteomes" id="UP000006589">
    <property type="component" value="Chromosome"/>
</dbReference>
<dbReference type="GO" id="GO:0016020">
    <property type="term" value="C:membrane"/>
    <property type="evidence" value="ECO:0007669"/>
    <property type="project" value="TreeGrafter"/>
</dbReference>
<dbReference type="GO" id="GO:0050660">
    <property type="term" value="F:flavin adenine dinucleotide binding"/>
    <property type="evidence" value="ECO:0007669"/>
    <property type="project" value="UniProtKB-UniRule"/>
</dbReference>
<dbReference type="GO" id="GO:0010181">
    <property type="term" value="F:FMN binding"/>
    <property type="evidence" value="ECO:0007669"/>
    <property type="project" value="InterPro"/>
</dbReference>
<dbReference type="GO" id="GO:0051287">
    <property type="term" value="F:NAD binding"/>
    <property type="evidence" value="ECO:0007669"/>
    <property type="project" value="UniProtKB-UniRule"/>
</dbReference>
<dbReference type="GO" id="GO:0050136">
    <property type="term" value="F:NADH:ubiquinone reductase (non-electrogenic) activity"/>
    <property type="evidence" value="ECO:0007669"/>
    <property type="project" value="RHEA"/>
</dbReference>
<dbReference type="GO" id="GO:0050661">
    <property type="term" value="F:NADP binding"/>
    <property type="evidence" value="ECO:0007669"/>
    <property type="project" value="UniProtKB-UniRule"/>
</dbReference>
<dbReference type="GO" id="GO:0008753">
    <property type="term" value="F:NADPH dehydrogenase (quinone) activity"/>
    <property type="evidence" value="ECO:0007669"/>
    <property type="project" value="RHEA"/>
</dbReference>
<dbReference type="FunFam" id="3.40.50.360:FF:000001">
    <property type="entry name" value="NAD(P)H dehydrogenase (Quinone) FQR1-like"/>
    <property type="match status" value="1"/>
</dbReference>
<dbReference type="Gene3D" id="3.40.50.360">
    <property type="match status" value="1"/>
</dbReference>
<dbReference type="HAMAP" id="MF_01017">
    <property type="entry name" value="NQOR"/>
    <property type="match status" value="1"/>
</dbReference>
<dbReference type="InterPro" id="IPR008254">
    <property type="entry name" value="Flavodoxin/NO_synth"/>
</dbReference>
<dbReference type="InterPro" id="IPR029039">
    <property type="entry name" value="Flavoprotein-like_sf"/>
</dbReference>
<dbReference type="InterPro" id="IPR010089">
    <property type="entry name" value="Flavoprotein_WrbA-like"/>
</dbReference>
<dbReference type="InterPro" id="IPR005025">
    <property type="entry name" value="FMN_Rdtase-like_dom"/>
</dbReference>
<dbReference type="InterPro" id="IPR037513">
    <property type="entry name" value="NQO"/>
</dbReference>
<dbReference type="NCBIfam" id="TIGR01755">
    <property type="entry name" value="flav_wrbA"/>
    <property type="match status" value="1"/>
</dbReference>
<dbReference type="NCBIfam" id="NF002999">
    <property type="entry name" value="PRK03767.1"/>
    <property type="match status" value="1"/>
</dbReference>
<dbReference type="PANTHER" id="PTHR30546">
    <property type="entry name" value="FLAVODOXIN-RELATED PROTEIN WRBA-RELATED"/>
    <property type="match status" value="1"/>
</dbReference>
<dbReference type="PANTHER" id="PTHR30546:SF23">
    <property type="entry name" value="FLAVOPROTEIN-LIKE PROTEIN YCP4-RELATED"/>
    <property type="match status" value="1"/>
</dbReference>
<dbReference type="Pfam" id="PF03358">
    <property type="entry name" value="FMN_red"/>
    <property type="match status" value="1"/>
</dbReference>
<dbReference type="SUPFAM" id="SSF52218">
    <property type="entry name" value="Flavoproteins"/>
    <property type="match status" value="1"/>
</dbReference>
<dbReference type="PROSITE" id="PS50902">
    <property type="entry name" value="FLAVODOXIN_LIKE"/>
    <property type="match status" value="1"/>
</dbReference>
<accession>B1LY35</accession>
<keyword id="KW-0285">Flavoprotein</keyword>
<keyword id="KW-0288">FMN</keyword>
<keyword id="KW-0520">NAD</keyword>
<keyword id="KW-0521">NADP</keyword>
<keyword id="KW-0547">Nucleotide-binding</keyword>
<keyword id="KW-0560">Oxidoreductase</keyword>
<evidence type="ECO:0000255" key="1">
    <source>
        <dbReference type="HAMAP-Rule" id="MF_01017"/>
    </source>
</evidence>
<comment type="catalytic activity">
    <reaction evidence="1">
        <text>a quinone + NADH + H(+) = a quinol + NAD(+)</text>
        <dbReference type="Rhea" id="RHEA:46160"/>
        <dbReference type="ChEBI" id="CHEBI:15378"/>
        <dbReference type="ChEBI" id="CHEBI:24646"/>
        <dbReference type="ChEBI" id="CHEBI:57540"/>
        <dbReference type="ChEBI" id="CHEBI:57945"/>
        <dbReference type="ChEBI" id="CHEBI:132124"/>
        <dbReference type="EC" id="1.6.5.2"/>
    </reaction>
</comment>
<comment type="catalytic activity">
    <reaction evidence="1">
        <text>a quinone + NADPH + H(+) = a quinol + NADP(+)</text>
        <dbReference type="Rhea" id="RHEA:46164"/>
        <dbReference type="ChEBI" id="CHEBI:15378"/>
        <dbReference type="ChEBI" id="CHEBI:24646"/>
        <dbReference type="ChEBI" id="CHEBI:57783"/>
        <dbReference type="ChEBI" id="CHEBI:58349"/>
        <dbReference type="ChEBI" id="CHEBI:132124"/>
        <dbReference type="EC" id="1.6.5.2"/>
    </reaction>
</comment>
<comment type="cofactor">
    <cofactor evidence="1">
        <name>FMN</name>
        <dbReference type="ChEBI" id="CHEBI:58210"/>
    </cofactor>
    <text evidence="1">Binds 1 FMN per monomer.</text>
</comment>
<comment type="similarity">
    <text evidence="1">Belongs to the WrbA family.</text>
</comment>
<name>NQOR_METRJ</name>
<organism>
    <name type="scientific">Methylobacterium radiotolerans (strain ATCC 27329 / DSM 1819 / JCM 2831 / NBRC 15690 / NCIMB 10815 / 0-1)</name>
    <dbReference type="NCBI Taxonomy" id="426355"/>
    <lineage>
        <taxon>Bacteria</taxon>
        <taxon>Pseudomonadati</taxon>
        <taxon>Pseudomonadota</taxon>
        <taxon>Alphaproteobacteria</taxon>
        <taxon>Hyphomicrobiales</taxon>
        <taxon>Methylobacteriaceae</taxon>
        <taxon>Methylobacterium</taxon>
    </lineage>
</organism>
<gene>
    <name type="ordered locus">Mrad2831_3831</name>
</gene>
<reference key="1">
    <citation type="submission" date="2008-03" db="EMBL/GenBank/DDBJ databases">
        <title>Complete sequence of chromosome of Methylobacterium radiotolerans JCM 2831.</title>
        <authorList>
            <consortium name="US DOE Joint Genome Institute"/>
            <person name="Copeland A."/>
            <person name="Lucas S."/>
            <person name="Lapidus A."/>
            <person name="Glavina del Rio T."/>
            <person name="Dalin E."/>
            <person name="Tice H."/>
            <person name="Bruce D."/>
            <person name="Goodwin L."/>
            <person name="Pitluck S."/>
            <person name="Kiss H."/>
            <person name="Brettin T."/>
            <person name="Detter J.C."/>
            <person name="Han C."/>
            <person name="Kuske C.R."/>
            <person name="Schmutz J."/>
            <person name="Larimer F."/>
            <person name="Land M."/>
            <person name="Hauser L."/>
            <person name="Kyrpides N."/>
            <person name="Mikhailova N."/>
            <person name="Marx C.J."/>
            <person name="Richardson P."/>
        </authorList>
    </citation>
    <scope>NUCLEOTIDE SEQUENCE [LARGE SCALE GENOMIC DNA]</scope>
    <source>
        <strain>ATCC 27329 / DSM 1819 / JCM 2831 / NBRC 15690 / NCIMB 10815 / 0-1</strain>
    </source>
</reference>
<sequence length="200" mass="21274">MAKVLVLYYSTYGHVEQMAYAVAEGARETGAEVVVKRVPELVPEEVARQNHFKLDQAAPVATVAELADYDAIIFGTPTRYGNMASQMKQFIDQTGGLWMKGALVGKVGSVFTSTASQHGGQETTLTSFHTVLFHHGMVVVGLPYSFQGQAGVEAVKGNTPYGASTIADGDGSRQPSAVELEGARFQGRHVAGIAAKLARD</sequence>